<name>RS11_METTH</name>
<gene>
    <name evidence="1" type="primary">rps11</name>
    <name type="ordered locus">MTH_36</name>
</gene>
<comment type="function">
    <text evidence="1">Located on the platform of the 30S subunit.</text>
</comment>
<comment type="subunit">
    <text evidence="1">Part of the 30S ribosomal subunit.</text>
</comment>
<comment type="similarity">
    <text evidence="1">Belongs to the universal ribosomal protein uS11 family.</text>
</comment>
<organism>
    <name type="scientific">Methanothermobacter thermautotrophicus (strain ATCC 29096 / DSM 1053 / JCM 10044 / NBRC 100330 / Delta H)</name>
    <name type="common">Methanobacterium thermoautotrophicum</name>
    <dbReference type="NCBI Taxonomy" id="187420"/>
    <lineage>
        <taxon>Archaea</taxon>
        <taxon>Methanobacteriati</taxon>
        <taxon>Methanobacteriota</taxon>
        <taxon>Methanomada group</taxon>
        <taxon>Methanobacteria</taxon>
        <taxon>Methanobacteriales</taxon>
        <taxon>Methanobacteriaceae</taxon>
        <taxon>Methanothermobacter</taxon>
    </lineage>
</organism>
<sequence length="130" mass="13673">MAEKEKWGIANIYSSFNNTIITITDITGAETITQWSGGKVVRADRQESSPFAAMEAATRAADDAKEKGIVGLHIKVRAPGGNGPRTPGPGAQAAIRALARAGMRIGKIEDVTPIPHDGTGRPGGKRGRRV</sequence>
<feature type="chain" id="PRO_0000123275" description="Small ribosomal subunit protein uS11">
    <location>
        <begin position="1"/>
        <end position="130"/>
    </location>
</feature>
<feature type="region of interest" description="Disordered" evidence="2">
    <location>
        <begin position="108"/>
        <end position="130"/>
    </location>
</feature>
<evidence type="ECO:0000255" key="1">
    <source>
        <dbReference type="HAMAP-Rule" id="MF_01310"/>
    </source>
</evidence>
<evidence type="ECO:0000256" key="2">
    <source>
        <dbReference type="SAM" id="MobiDB-lite"/>
    </source>
</evidence>
<evidence type="ECO:0000305" key="3"/>
<protein>
    <recommendedName>
        <fullName evidence="1">Small ribosomal subunit protein uS11</fullName>
    </recommendedName>
    <alternativeName>
        <fullName evidence="3">30S ribosomal protein S11</fullName>
    </alternativeName>
</protein>
<dbReference type="EMBL" id="AE000666">
    <property type="protein sequence ID" value="AAB84544.1"/>
    <property type="molecule type" value="Genomic_DNA"/>
</dbReference>
<dbReference type="PIR" id="D69146">
    <property type="entry name" value="D69146"/>
</dbReference>
<dbReference type="RefSeq" id="WP_010875677.1">
    <property type="nucleotide sequence ID" value="NC_000916.1"/>
</dbReference>
<dbReference type="SMR" id="O26143"/>
<dbReference type="FunCoup" id="O26143">
    <property type="interactions" value="157"/>
</dbReference>
<dbReference type="STRING" id="187420.MTH_36"/>
<dbReference type="PaxDb" id="187420-MTH_36"/>
<dbReference type="EnsemblBacteria" id="AAB84544">
    <property type="protein sequence ID" value="AAB84544"/>
    <property type="gene ID" value="MTH_36"/>
</dbReference>
<dbReference type="KEGG" id="mth:MTH_36"/>
<dbReference type="PATRIC" id="fig|187420.15.peg.35"/>
<dbReference type="HOGENOM" id="CLU_072439_6_1_2"/>
<dbReference type="InParanoid" id="O26143"/>
<dbReference type="Proteomes" id="UP000005223">
    <property type="component" value="Chromosome"/>
</dbReference>
<dbReference type="GO" id="GO:1990904">
    <property type="term" value="C:ribonucleoprotein complex"/>
    <property type="evidence" value="ECO:0007669"/>
    <property type="project" value="UniProtKB-KW"/>
</dbReference>
<dbReference type="GO" id="GO:0005840">
    <property type="term" value="C:ribosome"/>
    <property type="evidence" value="ECO:0007669"/>
    <property type="project" value="UniProtKB-KW"/>
</dbReference>
<dbReference type="GO" id="GO:0019843">
    <property type="term" value="F:rRNA binding"/>
    <property type="evidence" value="ECO:0007669"/>
    <property type="project" value="UniProtKB-UniRule"/>
</dbReference>
<dbReference type="GO" id="GO:0003735">
    <property type="term" value="F:structural constituent of ribosome"/>
    <property type="evidence" value="ECO:0007669"/>
    <property type="project" value="InterPro"/>
</dbReference>
<dbReference type="GO" id="GO:0006412">
    <property type="term" value="P:translation"/>
    <property type="evidence" value="ECO:0007669"/>
    <property type="project" value="UniProtKB-UniRule"/>
</dbReference>
<dbReference type="FunFam" id="3.30.420.80:FF:000007">
    <property type="entry name" value="30S ribosomal protein S11"/>
    <property type="match status" value="1"/>
</dbReference>
<dbReference type="Gene3D" id="3.30.420.80">
    <property type="entry name" value="Ribosomal protein S11"/>
    <property type="match status" value="1"/>
</dbReference>
<dbReference type="HAMAP" id="MF_01310">
    <property type="entry name" value="Ribosomal_uS11"/>
    <property type="match status" value="1"/>
</dbReference>
<dbReference type="InterPro" id="IPR001971">
    <property type="entry name" value="Ribosomal_uS11"/>
</dbReference>
<dbReference type="InterPro" id="IPR019961">
    <property type="entry name" value="Ribosomal_uS11_archaeal"/>
</dbReference>
<dbReference type="InterPro" id="IPR018102">
    <property type="entry name" value="Ribosomal_uS11_CS"/>
</dbReference>
<dbReference type="InterPro" id="IPR036967">
    <property type="entry name" value="Ribosomal_uS11_sf"/>
</dbReference>
<dbReference type="NCBIfam" id="TIGR03628">
    <property type="entry name" value="arch_S11P"/>
    <property type="match status" value="1"/>
</dbReference>
<dbReference type="NCBIfam" id="NF007176">
    <property type="entry name" value="PRK09607.1"/>
    <property type="match status" value="1"/>
</dbReference>
<dbReference type="PANTHER" id="PTHR11759">
    <property type="entry name" value="40S RIBOSOMAL PROTEIN S14/30S RIBOSOMAL PROTEIN S11"/>
    <property type="match status" value="1"/>
</dbReference>
<dbReference type="Pfam" id="PF00411">
    <property type="entry name" value="Ribosomal_S11"/>
    <property type="match status" value="1"/>
</dbReference>
<dbReference type="PIRSF" id="PIRSF002131">
    <property type="entry name" value="Ribosomal_S11"/>
    <property type="match status" value="1"/>
</dbReference>
<dbReference type="SUPFAM" id="SSF53137">
    <property type="entry name" value="Translational machinery components"/>
    <property type="match status" value="1"/>
</dbReference>
<dbReference type="PROSITE" id="PS00054">
    <property type="entry name" value="RIBOSOMAL_S11"/>
    <property type="match status" value="1"/>
</dbReference>
<proteinExistence type="inferred from homology"/>
<keyword id="KW-1185">Reference proteome</keyword>
<keyword id="KW-0687">Ribonucleoprotein</keyword>
<keyword id="KW-0689">Ribosomal protein</keyword>
<keyword id="KW-0694">RNA-binding</keyword>
<keyword id="KW-0699">rRNA-binding</keyword>
<accession>O26143</accession>
<reference key="1">
    <citation type="journal article" date="1997" name="J. Bacteriol.">
        <title>Complete genome sequence of Methanobacterium thermoautotrophicum deltaH: functional analysis and comparative genomics.</title>
        <authorList>
            <person name="Smith D.R."/>
            <person name="Doucette-Stamm L.A."/>
            <person name="Deloughery C."/>
            <person name="Lee H.-M."/>
            <person name="Dubois J."/>
            <person name="Aldredge T."/>
            <person name="Bashirzadeh R."/>
            <person name="Blakely D."/>
            <person name="Cook R."/>
            <person name="Gilbert K."/>
            <person name="Harrison D."/>
            <person name="Hoang L."/>
            <person name="Keagle P."/>
            <person name="Lumm W."/>
            <person name="Pothier B."/>
            <person name="Qiu D."/>
            <person name="Spadafora R."/>
            <person name="Vicare R."/>
            <person name="Wang Y."/>
            <person name="Wierzbowski J."/>
            <person name="Gibson R."/>
            <person name="Jiwani N."/>
            <person name="Caruso A."/>
            <person name="Bush D."/>
            <person name="Safer H."/>
            <person name="Patwell D."/>
            <person name="Prabhakar S."/>
            <person name="McDougall S."/>
            <person name="Shimer G."/>
            <person name="Goyal A."/>
            <person name="Pietrovski S."/>
            <person name="Church G.M."/>
            <person name="Daniels C.J."/>
            <person name="Mao J.-I."/>
            <person name="Rice P."/>
            <person name="Noelling J."/>
            <person name="Reeve J.N."/>
        </authorList>
    </citation>
    <scope>NUCLEOTIDE SEQUENCE [LARGE SCALE GENOMIC DNA]</scope>
    <source>
        <strain>ATCC 29096 / DSM 1053 / JCM 10044 / NBRC 100330 / Delta H</strain>
    </source>
</reference>